<proteinExistence type="evidence at protein level"/>
<organism>
    <name type="scientific">Drosophila melanogaster</name>
    <name type="common">Fruit fly</name>
    <dbReference type="NCBI Taxonomy" id="7227"/>
    <lineage>
        <taxon>Eukaryota</taxon>
        <taxon>Metazoa</taxon>
        <taxon>Ecdysozoa</taxon>
        <taxon>Arthropoda</taxon>
        <taxon>Hexapoda</taxon>
        <taxon>Insecta</taxon>
        <taxon>Pterygota</taxon>
        <taxon>Neoptera</taxon>
        <taxon>Endopterygota</taxon>
        <taxon>Diptera</taxon>
        <taxon>Brachycera</taxon>
        <taxon>Muscomorpha</taxon>
        <taxon>Ephydroidea</taxon>
        <taxon>Drosophilidae</taxon>
        <taxon>Drosophila</taxon>
        <taxon>Sophophora</taxon>
    </lineage>
</organism>
<evidence type="ECO:0000250" key="1"/>
<evidence type="ECO:0000256" key="2">
    <source>
        <dbReference type="SAM" id="MobiDB-lite"/>
    </source>
</evidence>
<evidence type="ECO:0000269" key="3">
    <source>
    </source>
</evidence>
<evidence type="ECO:0000269" key="4">
    <source>
    </source>
</evidence>
<evidence type="ECO:0000305" key="5"/>
<feature type="chain" id="PRO_0000089126" description="Actin-related protein 8">
    <location>
        <begin position="1"/>
        <end position="607"/>
    </location>
</feature>
<feature type="region of interest" description="Disordered" evidence="2">
    <location>
        <begin position="1"/>
        <end position="27"/>
    </location>
</feature>
<feature type="compositionally biased region" description="Polar residues" evidence="2">
    <location>
        <begin position="1"/>
        <end position="12"/>
    </location>
</feature>
<feature type="binding site" evidence="1">
    <location>
        <begin position="278"/>
        <end position="281"/>
    </location>
    <ligand>
        <name>ATP</name>
        <dbReference type="ChEBI" id="CHEBI:30616"/>
    </ligand>
</feature>
<feature type="modified residue" description="Phosphothreonine" evidence="4">
    <location>
        <position position="9"/>
    </location>
</feature>
<feature type="modified residue" description="Phosphoserine" evidence="4">
    <location>
        <position position="11"/>
    </location>
</feature>
<protein>
    <recommendedName>
        <fullName>Actin-related protein 8</fullName>
    </recommendedName>
</protein>
<comment type="function">
    <text evidence="1">Plays an important role in the functional organization of mitotic chromosomes. Exhibits low basal ATPase activity, and unable to polymerize (By similarity).</text>
</comment>
<comment type="function">
    <text evidence="1">Proposed core component of the chromatin remodeling INO80 complex which is involved in transcriptional regulation, DNA replication and probably DNA repair. Strongly prefer nucleosomes and H3-H4 tetramers over H2A-H2B dimers, suggesting it may act as a nucleosome recognition module within the complex (By similarity).</text>
</comment>
<comment type="subunit">
    <text evidence="1">Component of the chromatin remodeling Ino80 complex. Exists as monomers and dimers, but the dimer is most probably the biologically relevant form required for stable interactions with histones that exploits the twofold symmetry of the nucleosome core (By similarity).</text>
</comment>
<comment type="subcellular location">
    <subcellularLocation>
        <location evidence="3">Nucleus</location>
    </subcellularLocation>
    <subcellularLocation>
        <location evidence="3">Cytoplasm</location>
        <location evidence="3">Cytoskeleton</location>
    </subcellularLocation>
</comment>
<comment type="similarity">
    <text evidence="5">Belongs to the actin family. ARP8 subfamily.</text>
</comment>
<sequence>MQRSRASSTSSGRHPAPPPIGLPQPQAQPLEAPKIIVIHPGSQHLRIGRAADLNPLTLLHAVAYRRRPGASDRPHHDPLLPPLDNVNSNSGLMVEFEEQRLVVSRILQHCVVDNKNRLRVATPPQQLAHFNRSSQAEKVPAPSGQMADEPWLDREAPVLFDDRILRLGAVDARNYDIHFPIQRGELNVHNEKGGSLQASMQHLERIWSYALEERLKIPLRKLGTHCAVLVVNDVYVRRHLREFVTLLLRRLGFRRCFLVQDSVASTFGAGIGYGCVVDIGAQKTSIACIEDGISQLDARVRLSYGGGDLDQVLLLLLRKCGFPYRECNVQESYVDAHLLDELKEKFCHLNASVCGAQEKHFNLRKHNGQWLRYTIQVGDEALMAPLALFHTELLNITGRTKAVFTQQAVQDQYDCEDCFDAEYLKETGRKNGVRGGDILQLSTSAGYQPRPQLPVTADDEELIVVDQDETISNCQSQLGAQTAGGQMNSNGCYHNGQGLVLPLDQAIIQSINRLSSYETKRKMFGSILLVGSSAKLPGLAAWLEQRISQQVQSEVNVLIKGMDAGMVAWKGAAIMSVLESARELWISQNDWQRHGLRVLRERSPFLW</sequence>
<reference key="1">
    <citation type="journal article" date="2000" name="Science">
        <title>The genome sequence of Drosophila melanogaster.</title>
        <authorList>
            <person name="Adams M.D."/>
            <person name="Celniker S.E."/>
            <person name="Holt R.A."/>
            <person name="Evans C.A."/>
            <person name="Gocayne J.D."/>
            <person name="Amanatides P.G."/>
            <person name="Scherer S.E."/>
            <person name="Li P.W."/>
            <person name="Hoskins R.A."/>
            <person name="Galle R.F."/>
            <person name="George R.A."/>
            <person name="Lewis S.E."/>
            <person name="Richards S."/>
            <person name="Ashburner M."/>
            <person name="Henderson S.N."/>
            <person name="Sutton G.G."/>
            <person name="Wortman J.R."/>
            <person name="Yandell M.D."/>
            <person name="Zhang Q."/>
            <person name="Chen L.X."/>
            <person name="Brandon R.C."/>
            <person name="Rogers Y.-H.C."/>
            <person name="Blazej R.G."/>
            <person name="Champe M."/>
            <person name="Pfeiffer B.D."/>
            <person name="Wan K.H."/>
            <person name="Doyle C."/>
            <person name="Baxter E.G."/>
            <person name="Helt G."/>
            <person name="Nelson C.R."/>
            <person name="Miklos G.L.G."/>
            <person name="Abril J.F."/>
            <person name="Agbayani A."/>
            <person name="An H.-J."/>
            <person name="Andrews-Pfannkoch C."/>
            <person name="Baldwin D."/>
            <person name="Ballew R.M."/>
            <person name="Basu A."/>
            <person name="Baxendale J."/>
            <person name="Bayraktaroglu L."/>
            <person name="Beasley E.M."/>
            <person name="Beeson K.Y."/>
            <person name="Benos P.V."/>
            <person name="Berman B.P."/>
            <person name="Bhandari D."/>
            <person name="Bolshakov S."/>
            <person name="Borkova D."/>
            <person name="Botchan M.R."/>
            <person name="Bouck J."/>
            <person name="Brokstein P."/>
            <person name="Brottier P."/>
            <person name="Burtis K.C."/>
            <person name="Busam D.A."/>
            <person name="Butler H."/>
            <person name="Cadieu E."/>
            <person name="Center A."/>
            <person name="Chandra I."/>
            <person name="Cherry J.M."/>
            <person name="Cawley S."/>
            <person name="Dahlke C."/>
            <person name="Davenport L.B."/>
            <person name="Davies P."/>
            <person name="de Pablos B."/>
            <person name="Delcher A."/>
            <person name="Deng Z."/>
            <person name="Mays A.D."/>
            <person name="Dew I."/>
            <person name="Dietz S.M."/>
            <person name="Dodson K."/>
            <person name="Doup L.E."/>
            <person name="Downes M."/>
            <person name="Dugan-Rocha S."/>
            <person name="Dunkov B.C."/>
            <person name="Dunn P."/>
            <person name="Durbin K.J."/>
            <person name="Evangelista C.C."/>
            <person name="Ferraz C."/>
            <person name="Ferriera S."/>
            <person name="Fleischmann W."/>
            <person name="Fosler C."/>
            <person name="Gabrielian A.E."/>
            <person name="Garg N.S."/>
            <person name="Gelbart W.M."/>
            <person name="Glasser K."/>
            <person name="Glodek A."/>
            <person name="Gong F."/>
            <person name="Gorrell J.H."/>
            <person name="Gu Z."/>
            <person name="Guan P."/>
            <person name="Harris M."/>
            <person name="Harris N.L."/>
            <person name="Harvey D.A."/>
            <person name="Heiman T.J."/>
            <person name="Hernandez J.R."/>
            <person name="Houck J."/>
            <person name="Hostin D."/>
            <person name="Houston K.A."/>
            <person name="Howland T.J."/>
            <person name="Wei M.-H."/>
            <person name="Ibegwam C."/>
            <person name="Jalali M."/>
            <person name="Kalush F."/>
            <person name="Karpen G.H."/>
            <person name="Ke Z."/>
            <person name="Kennison J.A."/>
            <person name="Ketchum K.A."/>
            <person name="Kimmel B.E."/>
            <person name="Kodira C.D."/>
            <person name="Kraft C.L."/>
            <person name="Kravitz S."/>
            <person name="Kulp D."/>
            <person name="Lai Z."/>
            <person name="Lasko P."/>
            <person name="Lei Y."/>
            <person name="Levitsky A.A."/>
            <person name="Li J.H."/>
            <person name="Li Z."/>
            <person name="Liang Y."/>
            <person name="Lin X."/>
            <person name="Liu X."/>
            <person name="Mattei B."/>
            <person name="McIntosh T.C."/>
            <person name="McLeod M.P."/>
            <person name="McPherson D."/>
            <person name="Merkulov G."/>
            <person name="Milshina N.V."/>
            <person name="Mobarry C."/>
            <person name="Morris J."/>
            <person name="Moshrefi A."/>
            <person name="Mount S.M."/>
            <person name="Moy M."/>
            <person name="Murphy B."/>
            <person name="Murphy L."/>
            <person name="Muzny D.M."/>
            <person name="Nelson D.L."/>
            <person name="Nelson D.R."/>
            <person name="Nelson K.A."/>
            <person name="Nixon K."/>
            <person name="Nusskern D.R."/>
            <person name="Pacleb J.M."/>
            <person name="Palazzolo M."/>
            <person name="Pittman G.S."/>
            <person name="Pan S."/>
            <person name="Pollard J."/>
            <person name="Puri V."/>
            <person name="Reese M.G."/>
            <person name="Reinert K."/>
            <person name="Remington K."/>
            <person name="Saunders R.D.C."/>
            <person name="Scheeler F."/>
            <person name="Shen H."/>
            <person name="Shue B.C."/>
            <person name="Siden-Kiamos I."/>
            <person name="Simpson M."/>
            <person name="Skupski M.P."/>
            <person name="Smith T.J."/>
            <person name="Spier E."/>
            <person name="Spradling A.C."/>
            <person name="Stapleton M."/>
            <person name="Strong R."/>
            <person name="Sun E."/>
            <person name="Svirskas R."/>
            <person name="Tector C."/>
            <person name="Turner R."/>
            <person name="Venter E."/>
            <person name="Wang A.H."/>
            <person name="Wang X."/>
            <person name="Wang Z.-Y."/>
            <person name="Wassarman D.A."/>
            <person name="Weinstock G.M."/>
            <person name="Weissenbach J."/>
            <person name="Williams S.M."/>
            <person name="Woodage T."/>
            <person name="Worley K.C."/>
            <person name="Wu D."/>
            <person name="Yang S."/>
            <person name="Yao Q.A."/>
            <person name="Ye J."/>
            <person name="Yeh R.-F."/>
            <person name="Zaveri J.S."/>
            <person name="Zhan M."/>
            <person name="Zhang G."/>
            <person name="Zhao Q."/>
            <person name="Zheng L."/>
            <person name="Zheng X.H."/>
            <person name="Zhong F.N."/>
            <person name="Zhong W."/>
            <person name="Zhou X."/>
            <person name="Zhu S.C."/>
            <person name="Zhu X."/>
            <person name="Smith H.O."/>
            <person name="Gibbs R.A."/>
            <person name="Myers E.W."/>
            <person name="Rubin G.M."/>
            <person name="Venter J.C."/>
        </authorList>
    </citation>
    <scope>NUCLEOTIDE SEQUENCE [LARGE SCALE GENOMIC DNA]</scope>
    <source>
        <strain>Berkeley</strain>
    </source>
</reference>
<reference key="2">
    <citation type="journal article" date="2002" name="Genome Biol.">
        <title>Annotation of the Drosophila melanogaster euchromatic genome: a systematic review.</title>
        <authorList>
            <person name="Misra S."/>
            <person name="Crosby M.A."/>
            <person name="Mungall C.J."/>
            <person name="Matthews B.B."/>
            <person name="Campbell K.S."/>
            <person name="Hradecky P."/>
            <person name="Huang Y."/>
            <person name="Kaminker J.S."/>
            <person name="Millburn G.H."/>
            <person name="Prochnik S.E."/>
            <person name="Smith C.D."/>
            <person name="Tupy J.L."/>
            <person name="Whitfield E.J."/>
            <person name="Bayraktaroglu L."/>
            <person name="Berman B.P."/>
            <person name="Bettencourt B.R."/>
            <person name="Celniker S.E."/>
            <person name="de Grey A.D.N.J."/>
            <person name="Drysdale R.A."/>
            <person name="Harris N.L."/>
            <person name="Richter J."/>
            <person name="Russo S."/>
            <person name="Schroeder A.J."/>
            <person name="Shu S.Q."/>
            <person name="Stapleton M."/>
            <person name="Yamada C."/>
            <person name="Ashburner M."/>
            <person name="Gelbart W.M."/>
            <person name="Rubin G.M."/>
            <person name="Lewis S.E."/>
        </authorList>
    </citation>
    <scope>GENOME REANNOTATION</scope>
    <source>
        <strain>Berkeley</strain>
    </source>
</reference>
<reference key="3">
    <citation type="journal article" date="2002" name="Genome Biol.">
        <title>A Drosophila full-length cDNA resource.</title>
        <authorList>
            <person name="Stapleton M."/>
            <person name="Carlson J.W."/>
            <person name="Brokstein P."/>
            <person name="Yu C."/>
            <person name="Champe M."/>
            <person name="George R.A."/>
            <person name="Guarin H."/>
            <person name="Kronmiller B."/>
            <person name="Pacleb J.M."/>
            <person name="Park S."/>
            <person name="Wan K.H."/>
            <person name="Rubin G.M."/>
            <person name="Celniker S.E."/>
        </authorList>
    </citation>
    <scope>NUCLEOTIDE SEQUENCE [LARGE SCALE MRNA]</scope>
    <source>
        <strain>Berkeley</strain>
        <tissue>Embryo</tissue>
    </source>
</reference>
<reference key="4">
    <citation type="journal article" date="2006" name="Genes Dev.">
        <title>A Polycomb group protein complex with sequence-specific DNA-binding and selective methyl-lysine-binding activities.</title>
        <authorList>
            <person name="Klymenko T."/>
            <person name="Papp B."/>
            <person name="Fischle W."/>
            <person name="Koecher T."/>
            <person name="Schelder M."/>
            <person name="Fritsch C."/>
            <person name="Wild B."/>
            <person name="Wilm M."/>
            <person name="Mueller J."/>
        </authorList>
    </citation>
    <scope>IDENTIFICATION IN THE INO80 COMPLEX</scope>
    <scope>SUBCELLULAR LOCATION</scope>
    <source>
        <tissue>Embryo</tissue>
    </source>
</reference>
<reference key="5">
    <citation type="journal article" date="2008" name="J. Proteome Res.">
        <title>Phosphoproteome analysis of Drosophila melanogaster embryos.</title>
        <authorList>
            <person name="Zhai B."/>
            <person name="Villen J."/>
            <person name="Beausoleil S.A."/>
            <person name="Mintseris J."/>
            <person name="Gygi S.P."/>
        </authorList>
    </citation>
    <scope>PHOSPHORYLATION [LARGE SCALE ANALYSIS] AT THR-9 AND SER-11</scope>
    <scope>IDENTIFICATION BY MASS SPECTROMETRY</scope>
    <source>
        <tissue>Embryo</tissue>
    </source>
</reference>
<name>ARP8_DROME</name>
<keyword id="KW-0067">ATP-binding</keyword>
<keyword id="KW-0963">Cytoplasm</keyword>
<keyword id="KW-0206">Cytoskeleton</keyword>
<keyword id="KW-0227">DNA damage</keyword>
<keyword id="KW-0233">DNA recombination</keyword>
<keyword id="KW-0234">DNA repair</keyword>
<keyword id="KW-0547">Nucleotide-binding</keyword>
<keyword id="KW-0539">Nucleus</keyword>
<keyword id="KW-0597">Phosphoprotein</keyword>
<keyword id="KW-1185">Reference proteome</keyword>
<keyword id="KW-0804">Transcription</keyword>
<keyword id="KW-0805">Transcription regulation</keyword>
<dbReference type="EMBL" id="AE014298">
    <property type="protein sequence ID" value="AAF48774.1"/>
    <property type="molecule type" value="Genomic_DNA"/>
</dbReference>
<dbReference type="EMBL" id="AY051720">
    <property type="protein sequence ID" value="AAK93144.1"/>
    <property type="molecule type" value="mRNA"/>
</dbReference>
<dbReference type="RefSeq" id="NP_573251.1">
    <property type="nucleotide sequence ID" value="NM_133023.4"/>
</dbReference>
<dbReference type="SMR" id="Q9VX09"/>
<dbReference type="BioGRID" id="59091">
    <property type="interactions" value="2"/>
</dbReference>
<dbReference type="ComplexPortal" id="CPX-2693">
    <property type="entry name" value="INO80 chromatin remodeling complex"/>
</dbReference>
<dbReference type="DIP" id="DIP-23714N"/>
<dbReference type="FunCoup" id="Q9VX09">
    <property type="interactions" value="2112"/>
</dbReference>
<dbReference type="IntAct" id="Q9VX09">
    <property type="interactions" value="1"/>
</dbReference>
<dbReference type="STRING" id="7227.FBpp0074318"/>
<dbReference type="iPTMnet" id="Q9VX09"/>
<dbReference type="PaxDb" id="7227-FBpp0074318"/>
<dbReference type="DNASU" id="32769"/>
<dbReference type="EnsemblMetazoa" id="FBtr0074544">
    <property type="protein sequence ID" value="FBpp0074318"/>
    <property type="gene ID" value="FBgn0030877"/>
</dbReference>
<dbReference type="GeneID" id="32769"/>
<dbReference type="KEGG" id="dme:Dmel_CG7846"/>
<dbReference type="AGR" id="FB:FBgn0030877"/>
<dbReference type="CTD" id="32769"/>
<dbReference type="FlyBase" id="FBgn0030877">
    <property type="gene designation" value="Arp8"/>
</dbReference>
<dbReference type="VEuPathDB" id="VectorBase:FBgn0030877"/>
<dbReference type="eggNOG" id="KOG0797">
    <property type="taxonomic scope" value="Eukaryota"/>
</dbReference>
<dbReference type="GeneTree" id="ENSGT00390000001763"/>
<dbReference type="HOGENOM" id="CLU_006974_1_0_1"/>
<dbReference type="InParanoid" id="Q9VX09"/>
<dbReference type="OMA" id="AYKCMWA"/>
<dbReference type="OrthoDB" id="5572108at2759"/>
<dbReference type="PhylomeDB" id="Q9VX09"/>
<dbReference type="Reactome" id="R-DME-5689603">
    <property type="pathway name" value="UCH proteinases"/>
</dbReference>
<dbReference type="Reactome" id="R-DME-5696394">
    <property type="pathway name" value="DNA Damage Recognition in GG-NER"/>
</dbReference>
<dbReference type="BioGRID-ORCS" id="32769">
    <property type="hits" value="0 hits in 1 CRISPR screen"/>
</dbReference>
<dbReference type="GenomeRNAi" id="32769"/>
<dbReference type="PRO" id="PR:Q9VX09"/>
<dbReference type="Proteomes" id="UP000000803">
    <property type="component" value="Chromosome X"/>
</dbReference>
<dbReference type="Bgee" id="FBgn0030877">
    <property type="expression patterns" value="Expressed in egg cell and 56 other cell types or tissues"/>
</dbReference>
<dbReference type="GO" id="GO:0005737">
    <property type="term" value="C:cytoplasm"/>
    <property type="evidence" value="ECO:0007669"/>
    <property type="project" value="UniProtKB-KW"/>
</dbReference>
<dbReference type="GO" id="GO:0005856">
    <property type="term" value="C:cytoskeleton"/>
    <property type="evidence" value="ECO:0007669"/>
    <property type="project" value="UniProtKB-SubCell"/>
</dbReference>
<dbReference type="GO" id="GO:0031011">
    <property type="term" value="C:Ino80 complex"/>
    <property type="evidence" value="ECO:0000314"/>
    <property type="project" value="FlyBase"/>
</dbReference>
<dbReference type="GO" id="GO:0005634">
    <property type="term" value="C:nucleus"/>
    <property type="evidence" value="ECO:0000314"/>
    <property type="project" value="FlyBase"/>
</dbReference>
<dbReference type="GO" id="GO:0005524">
    <property type="term" value="F:ATP binding"/>
    <property type="evidence" value="ECO:0007669"/>
    <property type="project" value="UniProtKB-KW"/>
</dbReference>
<dbReference type="GO" id="GO:0006338">
    <property type="term" value="P:chromatin remodeling"/>
    <property type="evidence" value="ECO:0000315"/>
    <property type="project" value="UniProtKB"/>
</dbReference>
<dbReference type="GO" id="GO:0006310">
    <property type="term" value="P:DNA recombination"/>
    <property type="evidence" value="ECO:0007669"/>
    <property type="project" value="UniProtKB-KW"/>
</dbReference>
<dbReference type="GO" id="GO:0006302">
    <property type="term" value="P:double-strand break repair"/>
    <property type="evidence" value="ECO:0000318"/>
    <property type="project" value="GO_Central"/>
</dbReference>
<dbReference type="GO" id="GO:0006355">
    <property type="term" value="P:regulation of DNA-templated transcription"/>
    <property type="evidence" value="ECO:0000315"/>
    <property type="project" value="UniProtKB"/>
</dbReference>
<dbReference type="CDD" id="cd10206">
    <property type="entry name" value="ASKHA_NBD_Arp8-like"/>
    <property type="match status" value="1"/>
</dbReference>
<dbReference type="Gene3D" id="3.30.420.40">
    <property type="match status" value="2"/>
</dbReference>
<dbReference type="Gene3D" id="3.90.640.10">
    <property type="entry name" value="Actin, Chain A, domain 4"/>
    <property type="match status" value="1"/>
</dbReference>
<dbReference type="InterPro" id="IPR004000">
    <property type="entry name" value="Actin"/>
</dbReference>
<dbReference type="InterPro" id="IPR043129">
    <property type="entry name" value="ATPase_NBD"/>
</dbReference>
<dbReference type="PANTHER" id="PTHR11937">
    <property type="entry name" value="ACTIN"/>
    <property type="match status" value="1"/>
</dbReference>
<dbReference type="Pfam" id="PF00022">
    <property type="entry name" value="Actin"/>
    <property type="match status" value="2"/>
</dbReference>
<dbReference type="SMART" id="SM00268">
    <property type="entry name" value="ACTIN"/>
    <property type="match status" value="1"/>
</dbReference>
<dbReference type="SUPFAM" id="SSF53067">
    <property type="entry name" value="Actin-like ATPase domain"/>
    <property type="match status" value="2"/>
</dbReference>
<accession>Q9VX09</accession>
<gene>
    <name type="primary">Arp8</name>
    <name type="ORF">CG7846</name>
</gene>